<comment type="function">
    <text evidence="2">Active against casein. Has a role as a digestive enzyme.</text>
</comment>
<comment type="cofactor">
    <cofactor evidence="2">
        <name>Zn(2+)</name>
        <dbReference type="ChEBI" id="CHEBI:29105"/>
    </cofactor>
</comment>
<feature type="chain" id="PRO_0000078186" description="Astacin-like peptidase p16">
    <location>
        <begin position="1"/>
        <end position="103" status="greater than"/>
    </location>
</feature>
<feature type="domain" description="Peptidase M12A" evidence="1">
    <location>
        <begin position="1"/>
        <end position="103" status="greater than"/>
    </location>
</feature>
<feature type="non-consecutive residues" evidence="3">
    <location>
        <begin position="37"/>
        <end position="38"/>
    </location>
</feature>
<feature type="non-terminal residue" evidence="3">
    <location>
        <position position="103"/>
    </location>
</feature>
<accession>P84748</accession>
<reference key="1">
    <citation type="journal article" date="2006" name="Comp. Biochem. Physiol.">
        <title>Astacin family metallopeptidases and serine peptidase inhibitors in spider digestive fluid.</title>
        <authorList>
            <person name="Foradori M.J."/>
            <person name="Tillinghast E.K."/>
            <person name="Smith J.S."/>
            <person name="Townley M.A."/>
            <person name="Mooney R.E."/>
        </authorList>
    </citation>
    <scope>PROTEIN SEQUENCE</scope>
    <scope>FUNCTION</scope>
    <scope>COFACTOR</scope>
</reference>
<protein>
    <recommendedName>
        <fullName>Astacin-like peptidase p16</fullName>
        <ecNumber>3.4.24.-</ecNumber>
    </recommendedName>
</protein>
<name>PEP16_ARGAU</name>
<dbReference type="EC" id="3.4.24.-"/>
<dbReference type="SMR" id="P84748"/>
<dbReference type="BRENDA" id="3.4.24.21">
    <property type="organism ID" value="10238"/>
</dbReference>
<dbReference type="GO" id="GO:0046872">
    <property type="term" value="F:metal ion binding"/>
    <property type="evidence" value="ECO:0007669"/>
    <property type="project" value="UniProtKB-KW"/>
</dbReference>
<dbReference type="GO" id="GO:0004222">
    <property type="term" value="F:metalloendopeptidase activity"/>
    <property type="evidence" value="ECO:0007669"/>
    <property type="project" value="InterPro"/>
</dbReference>
<dbReference type="GO" id="GO:0006508">
    <property type="term" value="P:proteolysis"/>
    <property type="evidence" value="ECO:0007669"/>
    <property type="project" value="UniProtKB-KW"/>
</dbReference>
<dbReference type="Gene3D" id="3.40.390.10">
    <property type="entry name" value="Collagenase (Catalytic Domain)"/>
    <property type="match status" value="1"/>
</dbReference>
<dbReference type="InterPro" id="IPR024079">
    <property type="entry name" value="MetalloPept_cat_dom_sf"/>
</dbReference>
<dbReference type="InterPro" id="IPR001506">
    <property type="entry name" value="Peptidase_M12A"/>
</dbReference>
<dbReference type="PANTHER" id="PTHR10127">
    <property type="entry name" value="DISCOIDIN, CUB, EGF, LAMININ , AND ZINC METALLOPROTEASE DOMAIN CONTAINING"/>
    <property type="match status" value="1"/>
</dbReference>
<dbReference type="PANTHER" id="PTHR10127:SF780">
    <property type="entry name" value="METALLOENDOPEPTIDASE"/>
    <property type="match status" value="1"/>
</dbReference>
<dbReference type="Pfam" id="PF01400">
    <property type="entry name" value="Astacin"/>
    <property type="match status" value="1"/>
</dbReference>
<dbReference type="PRINTS" id="PR00480">
    <property type="entry name" value="ASTACIN"/>
</dbReference>
<dbReference type="SUPFAM" id="SSF55486">
    <property type="entry name" value="Metalloproteases ('zincins'), catalytic domain"/>
    <property type="match status" value="1"/>
</dbReference>
<dbReference type="PROSITE" id="PS51864">
    <property type="entry name" value="ASTACIN"/>
    <property type="match status" value="1"/>
</dbReference>
<keyword id="KW-0903">Direct protein sequencing</keyword>
<keyword id="KW-0378">Hydrolase</keyword>
<keyword id="KW-0479">Metal-binding</keyword>
<keyword id="KW-0482">Metalloprotease</keyword>
<keyword id="KW-0645">Protease</keyword>
<keyword id="KW-0862">Zinc</keyword>
<proteinExistence type="evidence at protein level"/>
<evidence type="ECO:0000255" key="1">
    <source>
        <dbReference type="PROSITE-ProRule" id="PRU01211"/>
    </source>
</evidence>
<evidence type="ECO:0000269" key="2">
    <source>
    </source>
</evidence>
<evidence type="ECO:0000303" key="3">
    <source>
    </source>
</evidence>
<sequence>NAIPGQHYRWPGAKVPYVIDSSLQSNTGFIQRAFQNYALGFYHEQNRSDRDDYLIIYVDNVQKGMEFNFAKLAPSQNILYTTFDYGSIMIYGNDAFSRDGSPM</sequence>
<organism>
    <name type="scientific">Argiope aurantia</name>
    <name type="common">Black-and-yellow garden spider</name>
    <dbReference type="NCBI Taxonomy" id="156844"/>
    <lineage>
        <taxon>Eukaryota</taxon>
        <taxon>Metazoa</taxon>
        <taxon>Ecdysozoa</taxon>
        <taxon>Arthropoda</taxon>
        <taxon>Chelicerata</taxon>
        <taxon>Arachnida</taxon>
        <taxon>Araneae</taxon>
        <taxon>Araneomorphae</taxon>
        <taxon>Entelegynae</taxon>
        <taxon>Araneoidea</taxon>
        <taxon>Araneidae</taxon>
        <taxon>Argiope</taxon>
    </lineage>
</organism>